<reference key="1">
    <citation type="journal article" date="1999" name="J. Reprod. Fertil.">
        <title>Differential expression of novel abundant and highly regionalized mRNAs of the canine epididymis.</title>
        <authorList>
            <person name="Gebhardt K."/>
            <person name="Ellerbrock K."/>
            <person name="Pera I."/>
            <person name="Ivell R."/>
            <person name="Kirchhoff C."/>
        </authorList>
    </citation>
    <scope>NUCLEOTIDE SEQUENCE [MRNA]</scope>
    <scope>TISSUE SPECIFICITY</scope>
    <source>
        <strain>Mongrel</strain>
        <tissue>Epididymis</tissue>
    </source>
</reference>
<organism>
    <name type="scientific">Canis lupus familiaris</name>
    <name type="common">Dog</name>
    <name type="synonym">Canis familiaris</name>
    <dbReference type="NCBI Taxonomy" id="9615"/>
    <lineage>
        <taxon>Eukaryota</taxon>
        <taxon>Metazoa</taxon>
        <taxon>Chordata</taxon>
        <taxon>Craniata</taxon>
        <taxon>Vertebrata</taxon>
        <taxon>Euteleostomi</taxon>
        <taxon>Mammalia</taxon>
        <taxon>Eutheria</taxon>
        <taxon>Laurasiatheria</taxon>
        <taxon>Carnivora</taxon>
        <taxon>Caniformia</taxon>
        <taxon>Canidae</taxon>
        <taxon>Canis</taxon>
    </lineage>
</organism>
<name>LY65C_CANLF</name>
<proteinExistence type="evidence at transcript level"/>
<keyword id="KW-1015">Disulfide bond</keyword>
<keyword id="KW-0325">Glycoprotein</keyword>
<keyword id="KW-1185">Reference proteome</keyword>
<keyword id="KW-0964">Secreted</keyword>
<keyword id="KW-0732">Signal</keyword>
<gene>
    <name type="primary">LY6G5C</name>
    <name type="synonym">CE8</name>
</gene>
<protein>
    <recommendedName>
        <fullName>Lymphocyte antigen 6 complex locus protein G5c</fullName>
    </recommendedName>
    <alternativeName>
        <fullName>Canine epididymal gene product 8</fullName>
        <shortName>CE8</shortName>
    </alternativeName>
    <alternativeName>
        <fullName>Epididymal secretory protein 8</fullName>
    </alternativeName>
</protein>
<comment type="function">
    <text evidence="1">May have a role in hematopoietic cell differentiation.</text>
</comment>
<comment type="subunit">
    <text evidence="1">Forms oligomers.</text>
</comment>
<comment type="subcellular location">
    <subcellularLocation>
        <location evidence="4">Secreted</location>
    </subcellularLocation>
</comment>
<comment type="tissue specificity">
    <text evidence="3">Abundantly expressed in the epididymis.</text>
</comment>
<comment type="PTM">
    <text evidence="1">N-glycosylated.</text>
</comment>
<evidence type="ECO:0000250" key="1"/>
<evidence type="ECO:0000255" key="2"/>
<evidence type="ECO:0000269" key="3">
    <source>
    </source>
</evidence>
<evidence type="ECO:0000305" key="4"/>
<accession>Q9XSV5</accession>
<feature type="signal peptide" evidence="2">
    <location>
        <begin position="1"/>
        <end position="29"/>
    </location>
</feature>
<feature type="chain" id="PRO_0000323015" description="Lymphocyte antigen 6 complex locus protein G5c">
    <location>
        <begin position="30"/>
        <end position="128"/>
    </location>
</feature>
<feature type="domain" description="UPAR/Ly6">
    <location>
        <begin position="37"/>
        <end position="128"/>
    </location>
</feature>
<feature type="glycosylation site" description="N-linked (GlcNAc...) asparagine" evidence="2">
    <location>
        <position position="73"/>
    </location>
</feature>
<feature type="disulfide bond" evidence="1">
    <location>
        <begin position="39"/>
        <end position="66"/>
    </location>
</feature>
<feature type="disulfide bond" evidence="1">
    <location>
        <begin position="42"/>
        <end position="51"/>
    </location>
</feature>
<feature type="disulfide bond" evidence="1">
    <location>
        <begin position="58"/>
        <end position="85"/>
    </location>
</feature>
<feature type="disulfide bond" evidence="1">
    <location>
        <begin position="94"/>
        <end position="111"/>
    </location>
</feature>
<feature type="disulfide bond" evidence="1">
    <location>
        <begin position="112"/>
        <end position="117"/>
    </location>
</feature>
<dbReference type="EMBL" id="AJ238952">
    <property type="protein sequence ID" value="CAB50694.1"/>
    <property type="molecule type" value="mRNA"/>
</dbReference>
<dbReference type="RefSeq" id="NP_001003166.1">
    <property type="nucleotide sequence ID" value="NM_001003166.1"/>
</dbReference>
<dbReference type="FunCoup" id="Q9XSV5">
    <property type="interactions" value="1"/>
</dbReference>
<dbReference type="STRING" id="9615.ENSCAFP00000000849"/>
<dbReference type="GlyCosmos" id="Q9XSV5">
    <property type="glycosylation" value="1 site, No reported glycans"/>
</dbReference>
<dbReference type="PaxDb" id="9612-ENSCAFP00000000849"/>
<dbReference type="Ensembl" id="ENSCAFT00000000930.5">
    <property type="protein sequence ID" value="ENSCAFP00000000849.4"/>
    <property type="gene ID" value="ENSCAFG00000000606.5"/>
</dbReference>
<dbReference type="Ensembl" id="ENSCAFT00030008091.1">
    <property type="protein sequence ID" value="ENSCAFP00030007110.1"/>
    <property type="gene ID" value="ENSCAFG00030004390.1"/>
</dbReference>
<dbReference type="Ensembl" id="ENSCAFT00040019692.1">
    <property type="protein sequence ID" value="ENSCAFP00040017092.1"/>
    <property type="gene ID" value="ENSCAFG00040010644.1"/>
</dbReference>
<dbReference type="Ensembl" id="ENSCAFT00845020501.1">
    <property type="protein sequence ID" value="ENSCAFP00845016072.1"/>
    <property type="gene ID" value="ENSCAFG00845011560.1"/>
</dbReference>
<dbReference type="GeneID" id="403793"/>
<dbReference type="KEGG" id="cfa:403793"/>
<dbReference type="CTD" id="80741"/>
<dbReference type="VEuPathDB" id="HostDB:ENSCAFG00845011560"/>
<dbReference type="VGNC" id="VGNC:42874">
    <property type="gene designation" value="LY6G5C"/>
</dbReference>
<dbReference type="eggNOG" id="ENOG502TD7Y">
    <property type="taxonomic scope" value="Eukaryota"/>
</dbReference>
<dbReference type="GeneTree" id="ENSGT00390000011513"/>
<dbReference type="InParanoid" id="Q9XSV5"/>
<dbReference type="OrthoDB" id="9449163at2759"/>
<dbReference type="Proteomes" id="UP000002254">
    <property type="component" value="Chromosome 12"/>
</dbReference>
<dbReference type="Proteomes" id="UP000694429">
    <property type="component" value="Chromosome 12"/>
</dbReference>
<dbReference type="Proteomes" id="UP000694542">
    <property type="component" value="Chromosome 12"/>
</dbReference>
<dbReference type="Proteomes" id="UP000805418">
    <property type="component" value="Chromosome 12"/>
</dbReference>
<dbReference type="Bgee" id="ENSCAFG00000000606">
    <property type="expression patterns" value="Expressed in granulocyte and 37 other cell types or tissues"/>
</dbReference>
<dbReference type="GO" id="GO:0009897">
    <property type="term" value="C:external side of plasma membrane"/>
    <property type="evidence" value="ECO:0007669"/>
    <property type="project" value="Ensembl"/>
</dbReference>
<dbReference type="GO" id="GO:0005576">
    <property type="term" value="C:extracellular region"/>
    <property type="evidence" value="ECO:0007669"/>
    <property type="project" value="UniProtKB-SubCell"/>
</dbReference>
<dbReference type="GO" id="GO:0032991">
    <property type="term" value="C:protein-containing complex"/>
    <property type="evidence" value="ECO:0007669"/>
    <property type="project" value="Ensembl"/>
</dbReference>
<dbReference type="GO" id="GO:0042802">
    <property type="term" value="F:identical protein binding"/>
    <property type="evidence" value="ECO:0007669"/>
    <property type="project" value="Ensembl"/>
</dbReference>
<dbReference type="CDD" id="cd23545">
    <property type="entry name" value="TFP_LU_ECD_Ly6G5c"/>
    <property type="match status" value="1"/>
</dbReference>
<dbReference type="InterPro" id="IPR016054">
    <property type="entry name" value="LY6_UPA_recep-like"/>
</dbReference>
<dbReference type="InterPro" id="IPR026110">
    <property type="entry name" value="LY6G5C"/>
</dbReference>
<dbReference type="PANTHER" id="PTHR14909">
    <property type="entry name" value="LYMPHOCYTE ANTIGEN 6 COMPLEX LOCUS PROTEIN G5C"/>
    <property type="match status" value="1"/>
</dbReference>
<dbReference type="PANTHER" id="PTHR14909:SF6">
    <property type="entry name" value="LYMPHOCYTE ANTIGEN 6 COMPLEX LOCUS PROTEIN G5C"/>
    <property type="match status" value="1"/>
</dbReference>
<dbReference type="Pfam" id="PF00021">
    <property type="entry name" value="UPAR_LY6"/>
    <property type="match status" value="1"/>
</dbReference>
<sequence>MGAEYGCLPSTSQALYVILLIVLVRMSLVFVQFPKYLRCYRCLLETKELGCLLGSDICLAPPGSSCMTLLIKNSSSGSDIMVSDCRHKEQMSDCSYTRSSPVFGFWIFSRCCLREFCNNPQNRVFYIP</sequence>